<feature type="chain" id="PRO_1000078297" description="Sec-independent protein translocase protein TatA">
    <location>
        <begin position="1"/>
        <end position="103"/>
    </location>
</feature>
<feature type="transmembrane region" description="Helical" evidence="1">
    <location>
        <begin position="1"/>
        <end position="21"/>
    </location>
</feature>
<feature type="region of interest" description="Disordered" evidence="2">
    <location>
        <begin position="48"/>
        <end position="103"/>
    </location>
</feature>
<feature type="compositionally biased region" description="Polar residues" evidence="2">
    <location>
        <begin position="59"/>
        <end position="74"/>
    </location>
</feature>
<dbReference type="EMBL" id="AM260525">
    <property type="protein sequence ID" value="CAK01248.1"/>
    <property type="molecule type" value="Genomic_DNA"/>
</dbReference>
<dbReference type="RefSeq" id="WP_012231376.1">
    <property type="nucleotide sequence ID" value="NC_010161.1"/>
</dbReference>
<dbReference type="SMR" id="A9IS13"/>
<dbReference type="KEGG" id="btr:BT_0841"/>
<dbReference type="eggNOG" id="COG1826">
    <property type="taxonomic scope" value="Bacteria"/>
</dbReference>
<dbReference type="HOGENOM" id="CLU_086034_5_0_5"/>
<dbReference type="Proteomes" id="UP000001592">
    <property type="component" value="Chromosome"/>
</dbReference>
<dbReference type="GO" id="GO:0033281">
    <property type="term" value="C:TAT protein transport complex"/>
    <property type="evidence" value="ECO:0007669"/>
    <property type="project" value="UniProtKB-UniRule"/>
</dbReference>
<dbReference type="GO" id="GO:0008320">
    <property type="term" value="F:protein transmembrane transporter activity"/>
    <property type="evidence" value="ECO:0007669"/>
    <property type="project" value="UniProtKB-UniRule"/>
</dbReference>
<dbReference type="GO" id="GO:0043953">
    <property type="term" value="P:protein transport by the Tat complex"/>
    <property type="evidence" value="ECO:0007669"/>
    <property type="project" value="UniProtKB-UniRule"/>
</dbReference>
<dbReference type="Gene3D" id="1.20.5.3310">
    <property type="match status" value="1"/>
</dbReference>
<dbReference type="HAMAP" id="MF_00236">
    <property type="entry name" value="TatA_E"/>
    <property type="match status" value="1"/>
</dbReference>
<dbReference type="InterPro" id="IPR003369">
    <property type="entry name" value="TatA/B/E"/>
</dbReference>
<dbReference type="InterPro" id="IPR006312">
    <property type="entry name" value="TatA/E"/>
</dbReference>
<dbReference type="NCBIfam" id="TIGR01411">
    <property type="entry name" value="tatAE"/>
    <property type="match status" value="1"/>
</dbReference>
<dbReference type="PANTHER" id="PTHR42982">
    <property type="entry name" value="SEC-INDEPENDENT PROTEIN TRANSLOCASE PROTEIN TATA"/>
    <property type="match status" value="1"/>
</dbReference>
<dbReference type="PANTHER" id="PTHR42982:SF1">
    <property type="entry name" value="SEC-INDEPENDENT PROTEIN TRANSLOCASE PROTEIN TATA"/>
    <property type="match status" value="1"/>
</dbReference>
<dbReference type="Pfam" id="PF02416">
    <property type="entry name" value="TatA_B_E"/>
    <property type="match status" value="1"/>
</dbReference>
<name>TATA_BART1</name>
<comment type="function">
    <text evidence="1">Part of the twin-arginine translocation (Tat) system that transports large folded proteins containing a characteristic twin-arginine motif in their signal peptide across membranes. TatA could form the protein-conducting channel of the Tat system.</text>
</comment>
<comment type="subunit">
    <text evidence="1">The Tat system comprises two distinct complexes: a TatABC complex, containing multiple copies of TatA, TatB and TatC subunits, and a separate TatA complex, containing only TatA subunits. Substrates initially bind to the TatABC complex, which probably triggers association of the separate TatA complex to form the active translocon.</text>
</comment>
<comment type="subcellular location">
    <subcellularLocation>
        <location evidence="1">Cell inner membrane</location>
        <topology evidence="1">Single-pass membrane protein</topology>
    </subcellularLocation>
</comment>
<comment type="similarity">
    <text evidence="1">Belongs to the TatA/E family.</text>
</comment>
<gene>
    <name evidence="1" type="primary">tatA</name>
    <name type="ordered locus">BT_0841</name>
</gene>
<sequence length="103" mass="11381">MGNIFSPTHLIIILLLILLLFGRGRVAELMGDVAKGIKAFKKNMKEEEESIEDKVEMADTSQVINEESQQSQPLSVKRAAIRRKASSDSKGGKASIAKKQRVK</sequence>
<keyword id="KW-0997">Cell inner membrane</keyword>
<keyword id="KW-1003">Cell membrane</keyword>
<keyword id="KW-0472">Membrane</keyword>
<keyword id="KW-0653">Protein transport</keyword>
<keyword id="KW-0811">Translocation</keyword>
<keyword id="KW-0812">Transmembrane</keyword>
<keyword id="KW-1133">Transmembrane helix</keyword>
<keyword id="KW-0813">Transport</keyword>
<reference key="1">
    <citation type="journal article" date="2007" name="Nat. Genet.">
        <title>Genomic analysis of Bartonella identifies type IV secretion systems as host adaptability factors.</title>
        <authorList>
            <person name="Saenz H.L."/>
            <person name="Engel P."/>
            <person name="Stoeckli M.C."/>
            <person name="Lanz C."/>
            <person name="Raddatz G."/>
            <person name="Vayssier-Taussat M."/>
            <person name="Birtles R."/>
            <person name="Schuster S.C."/>
            <person name="Dehio C."/>
        </authorList>
    </citation>
    <scope>NUCLEOTIDE SEQUENCE [LARGE SCALE GENOMIC DNA]</scope>
    <source>
        <strain>CIP 105476 / IBS 506</strain>
    </source>
</reference>
<accession>A9IS13</accession>
<organism>
    <name type="scientific">Bartonella tribocorum (strain CIP 105476 / IBS 506)</name>
    <dbReference type="NCBI Taxonomy" id="382640"/>
    <lineage>
        <taxon>Bacteria</taxon>
        <taxon>Pseudomonadati</taxon>
        <taxon>Pseudomonadota</taxon>
        <taxon>Alphaproteobacteria</taxon>
        <taxon>Hyphomicrobiales</taxon>
        <taxon>Bartonellaceae</taxon>
        <taxon>Bartonella</taxon>
    </lineage>
</organism>
<protein>
    <recommendedName>
        <fullName evidence="1">Sec-independent protein translocase protein TatA</fullName>
    </recommendedName>
</protein>
<proteinExistence type="inferred from homology"/>
<evidence type="ECO:0000255" key="1">
    <source>
        <dbReference type="HAMAP-Rule" id="MF_00236"/>
    </source>
</evidence>
<evidence type="ECO:0000256" key="2">
    <source>
        <dbReference type="SAM" id="MobiDB-lite"/>
    </source>
</evidence>